<feature type="signal peptide" evidence="4">
    <location>
        <begin position="1"/>
        <end position="32"/>
    </location>
</feature>
<feature type="chain" id="PRO_0000284702" description="Erythropoietin receptor" evidence="4">
    <location>
        <begin position="33"/>
        <end position="525"/>
    </location>
</feature>
<feature type="topological domain" description="Extracellular" evidence="4">
    <location>
        <begin position="33"/>
        <end position="249"/>
    </location>
</feature>
<feature type="transmembrane region" description="Helical" evidence="4">
    <location>
        <begin position="250"/>
        <end position="270"/>
    </location>
</feature>
<feature type="topological domain" description="Cytoplasmic" evidence="4">
    <location>
        <begin position="271"/>
        <end position="525"/>
    </location>
</feature>
<feature type="domain" description="Fibronectin type-III" evidence="5">
    <location>
        <begin position="146"/>
        <end position="246"/>
    </location>
</feature>
<feature type="region of interest" description="Disordered" evidence="6">
    <location>
        <begin position="434"/>
        <end position="459"/>
    </location>
</feature>
<feature type="region of interest" description="Disordered" evidence="6">
    <location>
        <begin position="492"/>
        <end position="513"/>
    </location>
</feature>
<feature type="short sequence motif" description="WSXWS motif" evidence="1">
    <location>
        <begin position="232"/>
        <end position="236"/>
    </location>
</feature>
<feature type="short sequence motif" description="Box 1 motif" evidence="2">
    <location>
        <begin position="281"/>
        <end position="289"/>
    </location>
</feature>
<feature type="short sequence motif" description="ITIM motif" evidence="1">
    <location>
        <begin position="487"/>
        <end position="492"/>
    </location>
</feature>
<feature type="compositionally biased region" description="Polar residues" evidence="6">
    <location>
        <begin position="447"/>
        <end position="459"/>
    </location>
</feature>
<feature type="site" description="Required for ligand binding" evidence="3">
    <location>
        <position position="117"/>
    </location>
</feature>
<feature type="glycosylation site" description="N-linked (GlcNAc...) asparagine" evidence="4">
    <location>
        <position position="77"/>
    </location>
</feature>
<feature type="glycosylation site" description="N-linked (GlcNAc...) asparagine" evidence="4">
    <location>
        <position position="100"/>
    </location>
</feature>
<feature type="glycosylation site" description="N-linked (GlcNAc...) asparagine" evidence="4">
    <location>
        <position position="149"/>
    </location>
</feature>
<feature type="glycosylation site" description="N-linked (GlcNAc...) asparagine" evidence="4">
    <location>
        <position position="185"/>
    </location>
</feature>
<feature type="disulfide bond" evidence="3">
    <location>
        <begin position="58"/>
        <end position="68"/>
    </location>
</feature>
<feature type="disulfide bond" evidence="3">
    <location>
        <begin position="91"/>
        <end position="107"/>
    </location>
</feature>
<feature type="sequence conflict" description="In Ref. 2; no nucleotide entry." evidence="10" ref="2">
    <original>F</original>
    <variation>Y</variation>
    <location>
        <position position="80"/>
    </location>
</feature>
<feature type="sequence conflict" description="In Ref. 2; no nucleotide entry." evidence="10" ref="2">
    <original>M</original>
    <variation>V</variation>
    <location>
        <position position="193"/>
    </location>
</feature>
<name>EPOR_XENLA</name>
<sequence length="525" mass="59673">MGAPSSLLFSTAHWRTVPFLLAFWVLLSTGTAEDPTMTPEFLRHISEKIPEEYQNPHCFTRDLNDFICFWEGERRKNASFSYSEDDQIKWCQLRTEVASNNTWWYICEFPVTDVVLFAGITISAYPCHKCQTAREIYINELVLLNPPLNVTVKEKQDPRGLLISWKPPHFQKNHDINNEIKYQVNYSTPGADMQTVEVEAGNTEIFLTDIVPAAYTVTVRCKADGVSYNGYWSDWTAPITIATIIDLRLLLLLSIAIFVALIAGVGVYIFMRHGMYLKHKVWPQVPTPENNFQGLFTTHKGNFKLWLGQADAYLLWISRHVFQEDPSSTLEVLSELPPAALPQSFNPNPLKDSYVVLDENRMPCSLEWLEAQRHKTVIVGAESMDSRLQTVNKDVVLEDTSKGQIAVKANNRVHSLEGDGSQGEAFREDEYVEAPRMEHERHRVSRENSVSSDGKQSIPSSFEYTELQTCEGLLSPKPRPVPPRMPLKYAYLDMSSSGEHSPPPSPNFYQNSPITNFLAPIYSQS</sequence>
<protein>
    <recommendedName>
        <fullName evidence="9">Erythropoietin receptor</fullName>
        <shortName>EPO-R</shortName>
        <shortName>EpoR</shortName>
        <shortName>xlEPOR</shortName>
    </recommendedName>
</protein>
<comment type="function">
    <text evidence="7">Receptor for erythropoietin (PubMed:16091591). Mediates erythropoietin-induced erythroblast proliferation and differentiation (PubMed:16091591).</text>
</comment>
<comment type="subcellular location">
    <subcellularLocation>
        <location evidence="7">Cell membrane</location>
        <topology evidence="7">Single-pass type I membrane protein</topology>
    </subcellularLocation>
</comment>
<comment type="tissue specificity">
    <text evidence="7 8">Expressed in the ventral blood island from stage 28 through to stage 36. Expressed in the circulating blood by stage 40. In the adult, highly expressed in peripheral blood cells including immature erythrocytes and basophils, and moderately expressed in the hematopoietic organs: liver, kidney and spleen. Expressed at a low level in adult brain.</text>
</comment>
<comment type="developmental stage">
    <text evidence="8">First expressed at a low level at stage 18 (late neurula), with high levels of expression seen from stage 32 through to stage 48 (tadpole).</text>
</comment>
<comment type="domain">
    <text evidence="1">The WSXWS motif appears to be necessary for proper protein folding and thereby efficient intracellular transport and cell-surface receptor binding.</text>
</comment>
<comment type="domain">
    <text evidence="2">The box 1 motif is required for JAK interaction and/or activation.</text>
</comment>
<comment type="domain">
    <text evidence="1">Contains 1 copy of a cytoplasmic motif that is referred to as the immunoreceptor tyrosine-based inhibitor motif (ITIM). This motif is involved in modulation of cellular responses. The phosphorylated ITIM motif can bind the SH2 domain of several SH2-containing phosphatases.</text>
</comment>
<comment type="similarity">
    <text evidence="4">Belongs to the type I cytokine receptor family. Type 1 subfamily.</text>
</comment>
<evidence type="ECO:0000250" key="1">
    <source>
        <dbReference type="UniProtKB" id="P14753"/>
    </source>
</evidence>
<evidence type="ECO:0000250" key="2">
    <source>
        <dbReference type="UniProtKB" id="P16310"/>
    </source>
</evidence>
<evidence type="ECO:0000250" key="3">
    <source>
        <dbReference type="UniProtKB" id="P19235"/>
    </source>
</evidence>
<evidence type="ECO:0000255" key="4"/>
<evidence type="ECO:0000255" key="5">
    <source>
        <dbReference type="PROSITE-ProRule" id="PRU00316"/>
    </source>
</evidence>
<evidence type="ECO:0000256" key="6">
    <source>
        <dbReference type="SAM" id="MobiDB-lite"/>
    </source>
</evidence>
<evidence type="ECO:0000269" key="7">
    <source>
    </source>
</evidence>
<evidence type="ECO:0000269" key="8">
    <source>
    </source>
</evidence>
<evidence type="ECO:0000303" key="9">
    <source>
    </source>
</evidence>
<evidence type="ECO:0000305" key="10"/>
<evidence type="ECO:0000312" key="11">
    <source>
        <dbReference type="EMBL" id="BAD98623.1"/>
    </source>
</evidence>
<proteinExistence type="evidence at transcript level"/>
<dbReference type="EMBL" id="AB189477">
    <property type="protein sequence ID" value="BAD98623.1"/>
    <property type="molecule type" value="mRNA"/>
</dbReference>
<dbReference type="SMR" id="Q4W815"/>
<dbReference type="GlyCosmos" id="Q4W815">
    <property type="glycosylation" value="4 sites, No reported glycans"/>
</dbReference>
<dbReference type="KEGG" id="xla:734211"/>
<dbReference type="AGR" id="Xenbase:XB-GENE-6251686"/>
<dbReference type="CTD" id="734211"/>
<dbReference type="Xenbase" id="XB-GENE-6251686">
    <property type="gene designation" value="epor.L"/>
</dbReference>
<dbReference type="OrthoDB" id="9890439at2759"/>
<dbReference type="Proteomes" id="UP000186698">
    <property type="component" value="Chromosome 3L"/>
</dbReference>
<dbReference type="Bgee" id="734211">
    <property type="expression patterns" value="Expressed in lung and 17 other cell types or tissues"/>
</dbReference>
<dbReference type="GO" id="GO:0009897">
    <property type="term" value="C:external side of plasma membrane"/>
    <property type="evidence" value="ECO:0000318"/>
    <property type="project" value="GO_Central"/>
</dbReference>
<dbReference type="GO" id="GO:0016020">
    <property type="term" value="C:membrane"/>
    <property type="evidence" value="ECO:0000303"/>
    <property type="project" value="UniProtKB"/>
</dbReference>
<dbReference type="GO" id="GO:0005886">
    <property type="term" value="C:plasma membrane"/>
    <property type="evidence" value="ECO:0000314"/>
    <property type="project" value="UniProtKB"/>
</dbReference>
<dbReference type="GO" id="GO:0004896">
    <property type="term" value="F:cytokine receptor activity"/>
    <property type="evidence" value="ECO:0000318"/>
    <property type="project" value="GO_Central"/>
</dbReference>
<dbReference type="GO" id="GO:0004900">
    <property type="term" value="F:erythropoietin receptor activity"/>
    <property type="evidence" value="ECO:0000314"/>
    <property type="project" value="UniProtKB"/>
</dbReference>
<dbReference type="GO" id="GO:0019221">
    <property type="term" value="P:cytokine-mediated signaling pathway"/>
    <property type="evidence" value="ECO:0000318"/>
    <property type="project" value="GO_Central"/>
</dbReference>
<dbReference type="GO" id="GO:0030218">
    <property type="term" value="P:erythrocyte differentiation"/>
    <property type="evidence" value="ECO:0000270"/>
    <property type="project" value="UniProtKB"/>
</dbReference>
<dbReference type="CDD" id="cd00063">
    <property type="entry name" value="FN3"/>
    <property type="match status" value="1"/>
</dbReference>
<dbReference type="Gene3D" id="2.60.40.10">
    <property type="entry name" value="Immunoglobulins"/>
    <property type="match status" value="2"/>
</dbReference>
<dbReference type="InterPro" id="IPR009167">
    <property type="entry name" value="Erythropoietin_rcpt"/>
</dbReference>
<dbReference type="InterPro" id="IPR003961">
    <property type="entry name" value="FN3_dom"/>
</dbReference>
<dbReference type="InterPro" id="IPR036116">
    <property type="entry name" value="FN3_sf"/>
</dbReference>
<dbReference type="InterPro" id="IPR015152">
    <property type="entry name" value="Growth/epo_recpt_lig-bind"/>
</dbReference>
<dbReference type="InterPro" id="IPR013783">
    <property type="entry name" value="Ig-like_fold"/>
</dbReference>
<dbReference type="PANTHER" id="PTHR23037">
    <property type="entry name" value="CYTOKINE RECEPTOR"/>
    <property type="match status" value="1"/>
</dbReference>
<dbReference type="PANTHER" id="PTHR23037:SF28">
    <property type="entry name" value="ERYTHROPOIETIN RECEPTOR"/>
    <property type="match status" value="1"/>
</dbReference>
<dbReference type="Pfam" id="PF09067">
    <property type="entry name" value="EpoR_lig-bind"/>
    <property type="match status" value="1"/>
</dbReference>
<dbReference type="PIRSF" id="PIRSF001959">
    <property type="entry name" value="EPO_receptor"/>
    <property type="match status" value="1"/>
</dbReference>
<dbReference type="SMART" id="SM00060">
    <property type="entry name" value="FN3"/>
    <property type="match status" value="1"/>
</dbReference>
<dbReference type="SUPFAM" id="SSF49265">
    <property type="entry name" value="Fibronectin type III"/>
    <property type="match status" value="2"/>
</dbReference>
<dbReference type="PROSITE" id="PS50853">
    <property type="entry name" value="FN3"/>
    <property type="match status" value="1"/>
</dbReference>
<gene>
    <name evidence="11" type="primary">epor</name>
</gene>
<accession>Q4W815</accession>
<reference evidence="10 11" key="1">
    <citation type="journal article" date="2005" name="J. Biochem.">
        <title>Expression of erythropoietin receptor-like molecule in Xenopus laevis and erythrocytopenia upon administration of its recombinant soluble form.</title>
        <authorList>
            <person name="Aizawa Y."/>
            <person name="Nogawa N."/>
            <person name="Kosaka N."/>
            <person name="Maeda Y."/>
            <person name="Watanabe T."/>
            <person name="Miyazaki H."/>
            <person name="Kato T."/>
        </authorList>
    </citation>
    <scope>NUCLEOTIDE SEQUENCE [MRNA]</scope>
    <scope>FUNCTION</scope>
    <scope>SUBCELLULAR LOCATION</scope>
    <scope>TISSUE SPECIFICITY</scope>
    <source>
        <tissue evidence="7">Erythrocyte</tissue>
    </source>
</reference>
<reference evidence="10" key="2">
    <citation type="journal article" date="2006" name="Gene Expr. Patterns">
        <title>Cloning and expression pattern of the Xenopus erythropoietin receptor.</title>
        <authorList>
            <person name="Yergeau D.A."/>
            <person name="Schmerer M."/>
            <person name="Kuliyev E."/>
            <person name="Evans T."/>
            <person name="Mead P.E."/>
        </authorList>
    </citation>
    <scope>NUCLEOTIDE SEQUENCE [MRNA]</scope>
    <scope>TISSUE SPECIFICITY</scope>
    <scope>DEVELOPMENTAL STAGE</scope>
    <source>
        <tissue evidence="8">Spleen</tissue>
    </source>
</reference>
<keyword id="KW-1003">Cell membrane</keyword>
<keyword id="KW-1015">Disulfide bond</keyword>
<keyword id="KW-0325">Glycoprotein</keyword>
<keyword id="KW-0472">Membrane</keyword>
<keyword id="KW-0675">Receptor</keyword>
<keyword id="KW-1185">Reference proteome</keyword>
<keyword id="KW-0732">Signal</keyword>
<keyword id="KW-0812">Transmembrane</keyword>
<keyword id="KW-1133">Transmembrane helix</keyword>
<organism>
    <name type="scientific">Xenopus laevis</name>
    <name type="common">African clawed frog</name>
    <dbReference type="NCBI Taxonomy" id="8355"/>
    <lineage>
        <taxon>Eukaryota</taxon>
        <taxon>Metazoa</taxon>
        <taxon>Chordata</taxon>
        <taxon>Craniata</taxon>
        <taxon>Vertebrata</taxon>
        <taxon>Euteleostomi</taxon>
        <taxon>Amphibia</taxon>
        <taxon>Batrachia</taxon>
        <taxon>Anura</taxon>
        <taxon>Pipoidea</taxon>
        <taxon>Pipidae</taxon>
        <taxon>Xenopodinae</taxon>
        <taxon>Xenopus</taxon>
        <taxon>Xenopus</taxon>
    </lineage>
</organism>